<feature type="chain" id="PRO_1000101153" description="Lysine--tRNA ligase">
    <location>
        <begin position="1"/>
        <end position="497"/>
    </location>
</feature>
<feature type="binding site" evidence="1">
    <location>
        <position position="409"/>
    </location>
    <ligand>
        <name>Mg(2+)</name>
        <dbReference type="ChEBI" id="CHEBI:18420"/>
        <label>1</label>
    </ligand>
</feature>
<feature type="binding site" evidence="1">
    <location>
        <position position="416"/>
    </location>
    <ligand>
        <name>Mg(2+)</name>
        <dbReference type="ChEBI" id="CHEBI:18420"/>
        <label>1</label>
    </ligand>
</feature>
<feature type="binding site" evidence="1">
    <location>
        <position position="416"/>
    </location>
    <ligand>
        <name>Mg(2+)</name>
        <dbReference type="ChEBI" id="CHEBI:18420"/>
        <label>2</label>
    </ligand>
</feature>
<sequence length="497" mass="56617">MSNQHIEELNDQQIVRREKMMALAEQGIDPFGKRFDRTANSAELKEKYADKTKEELHELNETAIVAGRLMTKRGKGKVGFAHLQDREGQIQLYVRKDSVGEDNYEIFKKADLGDFIGVEGEVMRTDMGELSIKATKLTHLSKSLRPLPEKFHGLTDIETIYRKRHLDLISNRESFDRFVTRSKMISEIRRYLDGLDFLEVETPVLHNEAGGAAARPFVTHHNAQNIDMVLRIATELHLKRLIVGGMERVYEIGRIFRNEGMDATHNPEFTSIEVYQAYADYLDIMNLTEGIIQHAAKAVKGDGPIDYQGTEIRINEPFKRVHMVDAIKEVTGVDFWPEMTVEEAIALAKEKQVPLEKHFTSVGHIINAFFEEFVEETLVQPTFVFGHPVEVSPLAKKNPEDTRFTDRFELFIMTKEYANAFTELNDPIDQLSRFEAQAQAKELGDDEATGIDYDFVEALEYGMPPTGGLGIGIDRLCMLLTNTTTIRDVLLFPTMKP</sequence>
<name>SYK_STRPZ</name>
<gene>
    <name evidence="1" type="primary">lysS</name>
    <name type="ordered locus">Spy49_0503c</name>
</gene>
<reference key="1">
    <citation type="journal article" date="2008" name="J. Bacteriol.">
        <title>Genome sequence of a nephritogenic and highly transformable M49 strain of Streptococcus pyogenes.</title>
        <authorList>
            <person name="McShan W.M."/>
            <person name="Ferretti J.J."/>
            <person name="Karasawa T."/>
            <person name="Suvorov A.N."/>
            <person name="Lin S."/>
            <person name="Qin B."/>
            <person name="Jia H."/>
            <person name="Kenton S."/>
            <person name="Najar F."/>
            <person name="Wu H."/>
            <person name="Scott J."/>
            <person name="Roe B.A."/>
            <person name="Savic D.J."/>
        </authorList>
    </citation>
    <scope>NUCLEOTIDE SEQUENCE [LARGE SCALE GENOMIC DNA]</scope>
    <source>
        <strain>NZ131</strain>
    </source>
</reference>
<dbReference type="EC" id="6.1.1.6" evidence="1"/>
<dbReference type="EMBL" id="CP000829">
    <property type="protein sequence ID" value="ACI60831.1"/>
    <property type="molecule type" value="Genomic_DNA"/>
</dbReference>
<dbReference type="SMR" id="B5XKG9"/>
<dbReference type="KEGG" id="soz:Spy49_0503c"/>
<dbReference type="HOGENOM" id="CLU_008255_6_0_9"/>
<dbReference type="Proteomes" id="UP000001039">
    <property type="component" value="Chromosome"/>
</dbReference>
<dbReference type="GO" id="GO:0005829">
    <property type="term" value="C:cytosol"/>
    <property type="evidence" value="ECO:0007669"/>
    <property type="project" value="TreeGrafter"/>
</dbReference>
<dbReference type="GO" id="GO:0005524">
    <property type="term" value="F:ATP binding"/>
    <property type="evidence" value="ECO:0007669"/>
    <property type="project" value="UniProtKB-UniRule"/>
</dbReference>
<dbReference type="GO" id="GO:0140096">
    <property type="term" value="F:catalytic activity, acting on a protein"/>
    <property type="evidence" value="ECO:0007669"/>
    <property type="project" value="UniProtKB-ARBA"/>
</dbReference>
<dbReference type="GO" id="GO:0004824">
    <property type="term" value="F:lysine-tRNA ligase activity"/>
    <property type="evidence" value="ECO:0007669"/>
    <property type="project" value="UniProtKB-UniRule"/>
</dbReference>
<dbReference type="GO" id="GO:0000287">
    <property type="term" value="F:magnesium ion binding"/>
    <property type="evidence" value="ECO:0007669"/>
    <property type="project" value="UniProtKB-UniRule"/>
</dbReference>
<dbReference type="GO" id="GO:0016740">
    <property type="term" value="F:transferase activity"/>
    <property type="evidence" value="ECO:0007669"/>
    <property type="project" value="UniProtKB-ARBA"/>
</dbReference>
<dbReference type="GO" id="GO:0000049">
    <property type="term" value="F:tRNA binding"/>
    <property type="evidence" value="ECO:0007669"/>
    <property type="project" value="TreeGrafter"/>
</dbReference>
<dbReference type="GO" id="GO:0006430">
    <property type="term" value="P:lysyl-tRNA aminoacylation"/>
    <property type="evidence" value="ECO:0007669"/>
    <property type="project" value="UniProtKB-UniRule"/>
</dbReference>
<dbReference type="CDD" id="cd00775">
    <property type="entry name" value="LysRS_core"/>
    <property type="match status" value="1"/>
</dbReference>
<dbReference type="CDD" id="cd04322">
    <property type="entry name" value="LysRS_N"/>
    <property type="match status" value="1"/>
</dbReference>
<dbReference type="FunFam" id="2.40.50.140:FF:000024">
    <property type="entry name" value="Lysine--tRNA ligase"/>
    <property type="match status" value="1"/>
</dbReference>
<dbReference type="FunFam" id="3.30.930.10:FF:000001">
    <property type="entry name" value="Lysine--tRNA ligase"/>
    <property type="match status" value="1"/>
</dbReference>
<dbReference type="Gene3D" id="3.30.930.10">
    <property type="entry name" value="Bira Bifunctional Protein, Domain 2"/>
    <property type="match status" value="1"/>
</dbReference>
<dbReference type="Gene3D" id="2.40.50.140">
    <property type="entry name" value="Nucleic acid-binding proteins"/>
    <property type="match status" value="1"/>
</dbReference>
<dbReference type="HAMAP" id="MF_00252">
    <property type="entry name" value="Lys_tRNA_synth_class2"/>
    <property type="match status" value="1"/>
</dbReference>
<dbReference type="InterPro" id="IPR004364">
    <property type="entry name" value="Aa-tRNA-synt_II"/>
</dbReference>
<dbReference type="InterPro" id="IPR006195">
    <property type="entry name" value="aa-tRNA-synth_II"/>
</dbReference>
<dbReference type="InterPro" id="IPR045864">
    <property type="entry name" value="aa-tRNA-synth_II/BPL/LPL"/>
</dbReference>
<dbReference type="InterPro" id="IPR002313">
    <property type="entry name" value="Lys-tRNA-ligase_II"/>
</dbReference>
<dbReference type="InterPro" id="IPR044136">
    <property type="entry name" value="Lys-tRNA-ligase_II_N"/>
</dbReference>
<dbReference type="InterPro" id="IPR018149">
    <property type="entry name" value="Lys-tRNA-synth_II_C"/>
</dbReference>
<dbReference type="InterPro" id="IPR012340">
    <property type="entry name" value="NA-bd_OB-fold"/>
</dbReference>
<dbReference type="InterPro" id="IPR004365">
    <property type="entry name" value="NA-bd_OB_tRNA"/>
</dbReference>
<dbReference type="NCBIfam" id="TIGR00499">
    <property type="entry name" value="lysS_bact"/>
    <property type="match status" value="1"/>
</dbReference>
<dbReference type="NCBIfam" id="NF001756">
    <property type="entry name" value="PRK00484.1"/>
    <property type="match status" value="1"/>
</dbReference>
<dbReference type="PANTHER" id="PTHR42918:SF15">
    <property type="entry name" value="LYSINE--TRNA LIGASE, CHLOROPLASTIC_MITOCHONDRIAL"/>
    <property type="match status" value="1"/>
</dbReference>
<dbReference type="PANTHER" id="PTHR42918">
    <property type="entry name" value="LYSYL-TRNA SYNTHETASE"/>
    <property type="match status" value="1"/>
</dbReference>
<dbReference type="Pfam" id="PF00152">
    <property type="entry name" value="tRNA-synt_2"/>
    <property type="match status" value="1"/>
</dbReference>
<dbReference type="Pfam" id="PF01336">
    <property type="entry name" value="tRNA_anti-codon"/>
    <property type="match status" value="1"/>
</dbReference>
<dbReference type="PRINTS" id="PR00982">
    <property type="entry name" value="TRNASYNTHLYS"/>
</dbReference>
<dbReference type="SUPFAM" id="SSF55681">
    <property type="entry name" value="Class II aaRS and biotin synthetases"/>
    <property type="match status" value="1"/>
</dbReference>
<dbReference type="SUPFAM" id="SSF50249">
    <property type="entry name" value="Nucleic acid-binding proteins"/>
    <property type="match status" value="1"/>
</dbReference>
<dbReference type="PROSITE" id="PS50862">
    <property type="entry name" value="AA_TRNA_LIGASE_II"/>
    <property type="match status" value="1"/>
</dbReference>
<protein>
    <recommendedName>
        <fullName evidence="1">Lysine--tRNA ligase</fullName>
        <ecNumber evidence="1">6.1.1.6</ecNumber>
    </recommendedName>
    <alternativeName>
        <fullName evidence="1">Lysyl-tRNA synthetase</fullName>
        <shortName evidence="1">LysRS</shortName>
    </alternativeName>
</protein>
<accession>B5XKG9</accession>
<comment type="catalytic activity">
    <reaction evidence="1">
        <text>tRNA(Lys) + L-lysine + ATP = L-lysyl-tRNA(Lys) + AMP + diphosphate</text>
        <dbReference type="Rhea" id="RHEA:20792"/>
        <dbReference type="Rhea" id="RHEA-COMP:9696"/>
        <dbReference type="Rhea" id="RHEA-COMP:9697"/>
        <dbReference type="ChEBI" id="CHEBI:30616"/>
        <dbReference type="ChEBI" id="CHEBI:32551"/>
        <dbReference type="ChEBI" id="CHEBI:33019"/>
        <dbReference type="ChEBI" id="CHEBI:78442"/>
        <dbReference type="ChEBI" id="CHEBI:78529"/>
        <dbReference type="ChEBI" id="CHEBI:456215"/>
        <dbReference type="EC" id="6.1.1.6"/>
    </reaction>
</comment>
<comment type="cofactor">
    <cofactor evidence="1">
        <name>Mg(2+)</name>
        <dbReference type="ChEBI" id="CHEBI:18420"/>
    </cofactor>
    <text evidence="1">Binds 3 Mg(2+) ions per subunit.</text>
</comment>
<comment type="subunit">
    <text evidence="1">Homodimer.</text>
</comment>
<comment type="subcellular location">
    <subcellularLocation>
        <location evidence="1">Cytoplasm</location>
    </subcellularLocation>
</comment>
<comment type="similarity">
    <text evidence="1">Belongs to the class-II aminoacyl-tRNA synthetase family.</text>
</comment>
<keyword id="KW-0030">Aminoacyl-tRNA synthetase</keyword>
<keyword id="KW-0067">ATP-binding</keyword>
<keyword id="KW-0963">Cytoplasm</keyword>
<keyword id="KW-0436">Ligase</keyword>
<keyword id="KW-0460">Magnesium</keyword>
<keyword id="KW-0479">Metal-binding</keyword>
<keyword id="KW-0547">Nucleotide-binding</keyword>
<keyword id="KW-0648">Protein biosynthesis</keyword>
<organism>
    <name type="scientific">Streptococcus pyogenes serotype M49 (strain NZ131)</name>
    <dbReference type="NCBI Taxonomy" id="471876"/>
    <lineage>
        <taxon>Bacteria</taxon>
        <taxon>Bacillati</taxon>
        <taxon>Bacillota</taxon>
        <taxon>Bacilli</taxon>
        <taxon>Lactobacillales</taxon>
        <taxon>Streptococcaceae</taxon>
        <taxon>Streptococcus</taxon>
    </lineage>
</organism>
<evidence type="ECO:0000255" key="1">
    <source>
        <dbReference type="HAMAP-Rule" id="MF_00252"/>
    </source>
</evidence>
<proteinExistence type="inferred from homology"/>